<organism>
    <name type="scientific">Brucella ovis (strain ATCC 25840 / 63/290 / NCTC 10512)</name>
    <dbReference type="NCBI Taxonomy" id="444178"/>
    <lineage>
        <taxon>Bacteria</taxon>
        <taxon>Pseudomonadati</taxon>
        <taxon>Pseudomonadota</taxon>
        <taxon>Alphaproteobacteria</taxon>
        <taxon>Hyphomicrobiales</taxon>
        <taxon>Brucellaceae</taxon>
        <taxon>Brucella/Ochrobactrum group</taxon>
        <taxon>Brucella</taxon>
    </lineage>
</organism>
<feature type="chain" id="PRO_0000361286" description="Blue-light-activated histidine kinase">
    <location>
        <begin position="1"/>
        <end position="489"/>
    </location>
</feature>
<feature type="domain" description="PAS" evidence="2">
    <location>
        <begin position="19"/>
        <end position="93"/>
    </location>
</feature>
<feature type="domain" description="PAC 1" evidence="3">
    <location>
        <begin position="93"/>
        <end position="147"/>
    </location>
</feature>
<feature type="domain" description="PAC 2" evidence="3">
    <location>
        <begin position="232"/>
        <end position="281"/>
    </location>
</feature>
<feature type="region of interest" description="HWE histidine kinase domain">
    <location>
        <begin position="259"/>
        <end position="341"/>
    </location>
</feature>
<feature type="modified residue" description="S-4a-FMN cysteine" evidence="1">
    <location>
        <position position="69"/>
    </location>
</feature>
<feature type="modified residue" description="Phosphohistidine; by autocatalysis" evidence="1">
    <location>
        <position position="288"/>
    </location>
</feature>
<name>LOVHK_BRUO2</name>
<keyword id="KW-0067">ATP-binding</keyword>
<keyword id="KW-0157">Chromophore</keyword>
<keyword id="KW-0285">Flavoprotein</keyword>
<keyword id="KW-0288">FMN</keyword>
<keyword id="KW-0418">Kinase</keyword>
<keyword id="KW-0547">Nucleotide-binding</keyword>
<keyword id="KW-0597">Phosphoprotein</keyword>
<keyword id="KW-0600">Photoreceptor protein</keyword>
<keyword id="KW-0675">Receptor</keyword>
<keyword id="KW-0677">Repeat</keyword>
<keyword id="KW-0716">Sensory transduction</keyword>
<keyword id="KW-0808">Transferase</keyword>
<keyword id="KW-0843">Virulence</keyword>
<reference key="1">
    <citation type="journal article" date="2009" name="PLoS ONE">
        <title>Genome degradation in Brucella ovis corresponds with narrowing of its host range and tissue tropism.</title>
        <authorList>
            <person name="Tsolis R.M."/>
            <person name="Seshadri R."/>
            <person name="Santos R.L."/>
            <person name="Sangari F.J."/>
            <person name="Lobo J.M."/>
            <person name="de Jong M.F."/>
            <person name="Ren Q."/>
            <person name="Myers G."/>
            <person name="Brinkac L.M."/>
            <person name="Nelson W.C."/>
            <person name="Deboy R.T."/>
            <person name="Angiuoli S."/>
            <person name="Khouri H."/>
            <person name="Dimitrov G."/>
            <person name="Robinson J.R."/>
            <person name="Mulligan S."/>
            <person name="Walker R.L."/>
            <person name="Elzer P.E."/>
            <person name="Hassan K.A."/>
            <person name="Paulsen I.T."/>
        </authorList>
    </citation>
    <scope>NUCLEOTIDE SEQUENCE [LARGE SCALE GENOMIC DNA]</scope>
    <source>
        <strain>ATCC 25840 / 63/290 / NCTC 10512</strain>
    </source>
</reference>
<protein>
    <recommendedName>
        <fullName>Blue-light-activated histidine kinase</fullName>
        <ecNumber>2.7.13.3</ecNumber>
    </recommendedName>
</protein>
<sequence>MAIDLRPFIPFGRGALSQATDPFRAAVEFTLMPMLITNPHLPDNPIVFANPAFLKLTGYEADEVMGRNCRFLQGHGTDPAHVCAIKSAIAAEKPIDIDIINYKKSGEAFWNRLHISPVHNANGRLQHFVSSQLDVTLELSRLVELEKERKTLSIETARSKDQLDYIVEVANIGFWTREFYSGKMTCSAECRRIYGFTPDEPVHFDTILDLVVLEDRMTVVQKAHQAVTGEPYSIEYRIVTRLGETRWLETRAKALTGENPLVLGIVQDVTERKKAEANKALVSREIAHRFKNSMAMVQSIANQTLRNTYDPEQANRLFSERLRALSQAHDMLLKENWAGATIQQICATALAPFNSTFANRIHMSGPHLLVSDRVTVALSLAFYELATNAVKYGALSNEKGVINITWAIMEDKGEKKFHMRWAESRGPEVMQPARRGFGQRLLHSVLAEELKAKCDVEFAASGLLIDVLAPITPEVFPGMGHNVPEQRIA</sequence>
<gene>
    <name type="ordered locus">BOV_A0554</name>
</gene>
<dbReference type="EC" id="2.7.13.3"/>
<dbReference type="EMBL" id="CP000709">
    <property type="protein sequence ID" value="ABQ62113.1"/>
    <property type="status" value="ALT_INIT"/>
    <property type="molecule type" value="Genomic_DNA"/>
</dbReference>
<dbReference type="RefSeq" id="WP_006016110.1">
    <property type="nucleotide sequence ID" value="NC_009504.1"/>
</dbReference>
<dbReference type="SMR" id="A5VUS1"/>
<dbReference type="GeneID" id="45125939"/>
<dbReference type="KEGG" id="bov:BOV_A0554"/>
<dbReference type="HOGENOM" id="CLU_000445_114_57_5"/>
<dbReference type="Proteomes" id="UP000006383">
    <property type="component" value="Chromosome II"/>
</dbReference>
<dbReference type="GO" id="GO:0005524">
    <property type="term" value="F:ATP binding"/>
    <property type="evidence" value="ECO:0007669"/>
    <property type="project" value="UniProtKB-KW"/>
</dbReference>
<dbReference type="GO" id="GO:0009881">
    <property type="term" value="F:photoreceptor activity"/>
    <property type="evidence" value="ECO:0007669"/>
    <property type="project" value="UniProtKB-KW"/>
</dbReference>
<dbReference type="GO" id="GO:0004673">
    <property type="term" value="F:protein histidine kinase activity"/>
    <property type="evidence" value="ECO:0007669"/>
    <property type="project" value="UniProtKB-EC"/>
</dbReference>
<dbReference type="CDD" id="cd00130">
    <property type="entry name" value="PAS"/>
    <property type="match status" value="2"/>
</dbReference>
<dbReference type="Gene3D" id="2.10.70.100">
    <property type="match status" value="1"/>
</dbReference>
<dbReference type="Gene3D" id="3.30.450.20">
    <property type="entry name" value="PAS domain"/>
    <property type="match status" value="2"/>
</dbReference>
<dbReference type="InterPro" id="IPR001610">
    <property type="entry name" value="PAC"/>
</dbReference>
<dbReference type="InterPro" id="IPR000014">
    <property type="entry name" value="PAS"/>
</dbReference>
<dbReference type="InterPro" id="IPR000700">
    <property type="entry name" value="PAS-assoc_C"/>
</dbReference>
<dbReference type="InterPro" id="IPR035965">
    <property type="entry name" value="PAS-like_dom_sf"/>
</dbReference>
<dbReference type="InterPro" id="IPR013655">
    <property type="entry name" value="PAS_fold_3"/>
</dbReference>
<dbReference type="InterPro" id="IPR011102">
    <property type="entry name" value="Sig_transdc_His_kinase_HWE"/>
</dbReference>
<dbReference type="NCBIfam" id="TIGR00229">
    <property type="entry name" value="sensory_box"/>
    <property type="match status" value="2"/>
</dbReference>
<dbReference type="PANTHER" id="PTHR41523:SF7">
    <property type="entry name" value="HISTIDINE KINASE"/>
    <property type="match status" value="1"/>
</dbReference>
<dbReference type="PANTHER" id="PTHR41523">
    <property type="entry name" value="TWO-COMPONENT SYSTEM SENSOR PROTEIN"/>
    <property type="match status" value="1"/>
</dbReference>
<dbReference type="Pfam" id="PF07536">
    <property type="entry name" value="HWE_HK"/>
    <property type="match status" value="1"/>
</dbReference>
<dbReference type="Pfam" id="PF08447">
    <property type="entry name" value="PAS_3"/>
    <property type="match status" value="1"/>
</dbReference>
<dbReference type="Pfam" id="PF13426">
    <property type="entry name" value="PAS_9"/>
    <property type="match status" value="1"/>
</dbReference>
<dbReference type="SMART" id="SM00911">
    <property type="entry name" value="HWE_HK"/>
    <property type="match status" value="1"/>
</dbReference>
<dbReference type="SMART" id="SM00086">
    <property type="entry name" value="PAC"/>
    <property type="match status" value="2"/>
</dbReference>
<dbReference type="SMART" id="SM00091">
    <property type="entry name" value="PAS"/>
    <property type="match status" value="2"/>
</dbReference>
<dbReference type="SUPFAM" id="SSF55785">
    <property type="entry name" value="PYP-like sensor domain (PAS domain)"/>
    <property type="match status" value="2"/>
</dbReference>
<dbReference type="PROSITE" id="PS50113">
    <property type="entry name" value="PAC"/>
    <property type="match status" value="2"/>
</dbReference>
<dbReference type="PROSITE" id="PS50112">
    <property type="entry name" value="PAS"/>
    <property type="match status" value="1"/>
</dbReference>
<accession>A5VUS1</accession>
<proteinExistence type="inferred from homology"/>
<evidence type="ECO:0000250" key="1"/>
<evidence type="ECO:0000255" key="2">
    <source>
        <dbReference type="PROSITE-ProRule" id="PRU00140"/>
    </source>
</evidence>
<evidence type="ECO:0000255" key="3">
    <source>
        <dbReference type="PROSITE-ProRule" id="PRU00141"/>
    </source>
</evidence>
<evidence type="ECO:0000305" key="4"/>
<comment type="function">
    <text evidence="1">Photosensitive kinase that is involved in increased bacterial virulence upon exposure to light. Once ejected from an infected animal host, sunlight acts as an environmental signal that increases the virulence of the bacterium, preparing it for infection of the next host. This photoreceptor protein is directly related to the bacterium's survival and replication within host macrophages (By similarity).</text>
</comment>
<comment type="catalytic activity">
    <reaction>
        <text>ATP + protein L-histidine = ADP + protein N-phospho-L-histidine.</text>
        <dbReference type="EC" id="2.7.13.3"/>
    </reaction>
</comment>
<comment type="PTM">
    <text evidence="1">FMN binds covalently to cysteine after exposure to blue light and this bond is spontaneously broken in the dark.</text>
</comment>
<comment type="sequence caution" evidence="4">
    <conflict type="erroneous initiation">
        <sequence resource="EMBL-CDS" id="ABQ62113"/>
    </conflict>
</comment>